<sequence length="172" mass="18590">MDLKEKIRIIDGFPKEGISFKDITTLIGDGEGLKASIDMFVEYLKDKNVDLIVGPEARGFIFGVPVAYALGAGFVPVRKPGKLPGETISVNYDLEYGSDSLQIHKDSIKKGQRVAIVDDLLATGGTVEGVAKLVEEAGGEVVSLAFLIELIDLKGRDKLGDYDVISLTQYDI</sequence>
<comment type="function">
    <text evidence="1">Catalyzes a salvage reaction resulting in the formation of AMP, that is energically less costly than de novo synthesis.</text>
</comment>
<comment type="catalytic activity">
    <reaction evidence="1">
        <text>AMP + diphosphate = 5-phospho-alpha-D-ribose 1-diphosphate + adenine</text>
        <dbReference type="Rhea" id="RHEA:16609"/>
        <dbReference type="ChEBI" id="CHEBI:16708"/>
        <dbReference type="ChEBI" id="CHEBI:33019"/>
        <dbReference type="ChEBI" id="CHEBI:58017"/>
        <dbReference type="ChEBI" id="CHEBI:456215"/>
        <dbReference type="EC" id="2.4.2.7"/>
    </reaction>
</comment>
<comment type="pathway">
    <text evidence="1">Purine metabolism; AMP biosynthesis via salvage pathway; AMP from adenine: step 1/1.</text>
</comment>
<comment type="subunit">
    <text evidence="1">Homodimer.</text>
</comment>
<comment type="subcellular location">
    <subcellularLocation>
        <location evidence="1">Cytoplasm</location>
    </subcellularLocation>
</comment>
<comment type="similarity">
    <text evidence="1">Belongs to the purine/pyrimidine phosphoribosyltransferase family.</text>
</comment>
<keyword id="KW-0963">Cytoplasm</keyword>
<keyword id="KW-0328">Glycosyltransferase</keyword>
<keyword id="KW-0660">Purine salvage</keyword>
<keyword id="KW-0808">Transferase</keyword>
<gene>
    <name evidence="1" type="primary">apt</name>
    <name type="ordered locus">CLL_A1030</name>
</gene>
<name>APT_CLOBB</name>
<protein>
    <recommendedName>
        <fullName evidence="1">Adenine phosphoribosyltransferase</fullName>
        <shortName evidence="1">APRT</shortName>
        <ecNumber evidence="1">2.4.2.7</ecNumber>
    </recommendedName>
</protein>
<proteinExistence type="inferred from homology"/>
<reference key="1">
    <citation type="submission" date="2008-04" db="EMBL/GenBank/DDBJ databases">
        <title>Complete sequence of Clostridium botulinum strain Eklund.</title>
        <authorList>
            <person name="Brinkac L.M."/>
            <person name="Brown J.L."/>
            <person name="Bruce D."/>
            <person name="Detter C."/>
            <person name="Munk C."/>
            <person name="Smith L.A."/>
            <person name="Smith T.J."/>
            <person name="Sutton G."/>
            <person name="Brettin T.S."/>
        </authorList>
    </citation>
    <scope>NUCLEOTIDE SEQUENCE [LARGE SCALE GENOMIC DNA]</scope>
    <source>
        <strain>Eklund 17B / Type B</strain>
    </source>
</reference>
<feature type="chain" id="PRO_1000088965" description="Adenine phosphoribosyltransferase">
    <location>
        <begin position="1"/>
        <end position="172"/>
    </location>
</feature>
<accession>B2TMZ9</accession>
<dbReference type="EC" id="2.4.2.7" evidence="1"/>
<dbReference type="EMBL" id="CP001056">
    <property type="protein sequence ID" value="ACD23451.1"/>
    <property type="molecule type" value="Genomic_DNA"/>
</dbReference>
<dbReference type="SMR" id="B2TMZ9"/>
<dbReference type="KEGG" id="cbk:CLL_A1030"/>
<dbReference type="PATRIC" id="fig|935198.13.peg.979"/>
<dbReference type="HOGENOM" id="CLU_063339_3_0_9"/>
<dbReference type="UniPathway" id="UPA00588">
    <property type="reaction ID" value="UER00646"/>
</dbReference>
<dbReference type="Proteomes" id="UP000001195">
    <property type="component" value="Chromosome"/>
</dbReference>
<dbReference type="GO" id="GO:0005737">
    <property type="term" value="C:cytoplasm"/>
    <property type="evidence" value="ECO:0007669"/>
    <property type="project" value="UniProtKB-SubCell"/>
</dbReference>
<dbReference type="GO" id="GO:0002055">
    <property type="term" value="F:adenine binding"/>
    <property type="evidence" value="ECO:0007669"/>
    <property type="project" value="TreeGrafter"/>
</dbReference>
<dbReference type="GO" id="GO:0003999">
    <property type="term" value="F:adenine phosphoribosyltransferase activity"/>
    <property type="evidence" value="ECO:0007669"/>
    <property type="project" value="UniProtKB-UniRule"/>
</dbReference>
<dbReference type="GO" id="GO:0016208">
    <property type="term" value="F:AMP binding"/>
    <property type="evidence" value="ECO:0007669"/>
    <property type="project" value="TreeGrafter"/>
</dbReference>
<dbReference type="GO" id="GO:0006168">
    <property type="term" value="P:adenine salvage"/>
    <property type="evidence" value="ECO:0007669"/>
    <property type="project" value="InterPro"/>
</dbReference>
<dbReference type="GO" id="GO:0044209">
    <property type="term" value="P:AMP salvage"/>
    <property type="evidence" value="ECO:0007669"/>
    <property type="project" value="UniProtKB-UniRule"/>
</dbReference>
<dbReference type="GO" id="GO:0006166">
    <property type="term" value="P:purine ribonucleoside salvage"/>
    <property type="evidence" value="ECO:0007669"/>
    <property type="project" value="UniProtKB-KW"/>
</dbReference>
<dbReference type="CDD" id="cd06223">
    <property type="entry name" value="PRTases_typeI"/>
    <property type="match status" value="1"/>
</dbReference>
<dbReference type="FunFam" id="3.40.50.2020:FF:000004">
    <property type="entry name" value="Adenine phosphoribosyltransferase"/>
    <property type="match status" value="1"/>
</dbReference>
<dbReference type="Gene3D" id="3.40.50.2020">
    <property type="match status" value="1"/>
</dbReference>
<dbReference type="HAMAP" id="MF_00004">
    <property type="entry name" value="Aden_phosphoribosyltr"/>
    <property type="match status" value="1"/>
</dbReference>
<dbReference type="InterPro" id="IPR005764">
    <property type="entry name" value="Ade_phspho_trans"/>
</dbReference>
<dbReference type="InterPro" id="IPR000836">
    <property type="entry name" value="PRibTrfase_dom"/>
</dbReference>
<dbReference type="InterPro" id="IPR029057">
    <property type="entry name" value="PRTase-like"/>
</dbReference>
<dbReference type="InterPro" id="IPR050054">
    <property type="entry name" value="UPRTase/APRTase"/>
</dbReference>
<dbReference type="NCBIfam" id="TIGR01090">
    <property type="entry name" value="apt"/>
    <property type="match status" value="1"/>
</dbReference>
<dbReference type="NCBIfam" id="NF002633">
    <property type="entry name" value="PRK02304.1-2"/>
    <property type="match status" value="1"/>
</dbReference>
<dbReference type="NCBIfam" id="NF002634">
    <property type="entry name" value="PRK02304.1-3"/>
    <property type="match status" value="1"/>
</dbReference>
<dbReference type="NCBIfam" id="NF002636">
    <property type="entry name" value="PRK02304.1-5"/>
    <property type="match status" value="1"/>
</dbReference>
<dbReference type="PANTHER" id="PTHR32315">
    <property type="entry name" value="ADENINE PHOSPHORIBOSYLTRANSFERASE"/>
    <property type="match status" value="1"/>
</dbReference>
<dbReference type="PANTHER" id="PTHR32315:SF3">
    <property type="entry name" value="ADENINE PHOSPHORIBOSYLTRANSFERASE"/>
    <property type="match status" value="1"/>
</dbReference>
<dbReference type="Pfam" id="PF00156">
    <property type="entry name" value="Pribosyltran"/>
    <property type="match status" value="1"/>
</dbReference>
<dbReference type="SUPFAM" id="SSF53271">
    <property type="entry name" value="PRTase-like"/>
    <property type="match status" value="1"/>
</dbReference>
<organism>
    <name type="scientific">Clostridium botulinum (strain Eklund 17B / Type B)</name>
    <dbReference type="NCBI Taxonomy" id="935198"/>
    <lineage>
        <taxon>Bacteria</taxon>
        <taxon>Bacillati</taxon>
        <taxon>Bacillota</taxon>
        <taxon>Clostridia</taxon>
        <taxon>Eubacteriales</taxon>
        <taxon>Clostridiaceae</taxon>
        <taxon>Clostridium</taxon>
    </lineage>
</organism>
<evidence type="ECO:0000255" key="1">
    <source>
        <dbReference type="HAMAP-Rule" id="MF_00004"/>
    </source>
</evidence>